<gene>
    <name evidence="5" type="primary">ChsIV</name>
    <name type="ORF">MAC_07513</name>
</gene>
<accession>E9ECB5</accession>
<comment type="function">
    <text evidence="4 7">Polymerizes chitin, a structural polymer of the cell wall and septum, by transferring the sugar moiety of UDP-GlcNAc to the non-reducing end of the growing chitin polymer (Probable). Contributes to the production of conidia and the ability of fungal conidia to germinate (PubMed:31461507). Involved in fungal stress tolerances (PubMed:31461507).</text>
</comment>
<comment type="catalytic activity">
    <reaction evidence="7">
        <text>[(1-&gt;4)-N-acetyl-beta-D-glucosaminyl](n) + UDP-N-acetyl-alpha-D-glucosamine = [(1-&gt;4)-N-acetyl-beta-D-glucosaminyl](n+1) + UDP + H(+)</text>
        <dbReference type="Rhea" id="RHEA:16637"/>
        <dbReference type="Rhea" id="RHEA-COMP:9593"/>
        <dbReference type="Rhea" id="RHEA-COMP:9595"/>
        <dbReference type="ChEBI" id="CHEBI:15378"/>
        <dbReference type="ChEBI" id="CHEBI:17029"/>
        <dbReference type="ChEBI" id="CHEBI:57705"/>
        <dbReference type="ChEBI" id="CHEBI:58223"/>
        <dbReference type="EC" id="2.4.1.16"/>
    </reaction>
    <physiologicalReaction direction="left-to-right" evidence="7">
        <dbReference type="Rhea" id="RHEA:16638"/>
    </physiologicalReaction>
</comment>
<comment type="subcellular location">
    <subcellularLocation>
        <location evidence="6">Cell membrane</location>
        <topology evidence="1">Multi-pass membrane protein</topology>
    </subcellularLocation>
</comment>
<comment type="tissue specificity">
    <text evidence="4">Highly expressed in conidia.</text>
</comment>
<comment type="disruption phenotype">
    <text evidence="4">Leads to delayed conidial germination.</text>
</comment>
<comment type="similarity">
    <text evidence="6">Belongs to the chitin synthase family. Class IV subfamily.</text>
</comment>
<sequence>MSLPERPGGSPVYEHRNVYRNSPSRRPRPNDIETGFQSVPRAGHERGKSVSSYAETISNPHANTETLPLSPTHPTASPPPHSPDQPFTRKRSLIRPERNRIDKDHRNYHYHKHAANMETMPSSTGNDPILENVDVSTEPSGGSQTHGSFADSSPPRHHRSRKMSGDDQEKGNTRVKSRPRRSKSGKITKETRHRKSRKNPATAEQIRPPSAWNVYCAIVTFWCPDFMLKCCGKPTKAQRRAWREKMGLISIILVIMAIVGFLTFGFTATVCSAPPERLRVNKVTGGYMIFHGVAYDLSTSHHPPAEGIPLRQDGTGANVLFDLPEKHSGQDGSFLFQNVNGHCKGLINKAPGSDVPTNSDNELAWYFPCTTFNQDGSSRPNFTNPYYLGYACHTSANARNAFYVGLKGAADVYFTWDDIRNSSRNLVVYSGSVLDLNLLNWFNESEISVPDRFKVLRDQDSAVNKAIRGRDVTRMFQSPGDKQVAQCLEEITRVGFVDTETVGCIASKVVLYCALILILSVVGTRFVLALIFQWFISRKYAASKTSQSSDRRKRAKQIEDWSEDIYRAPARLPGDVGSSAMGSSDRTSKRGSSFLPTTSRFSAVYGSDRPTGARRLPTTMSSQGPASALLNPNSIYRQGNDSRASFLRPDPYSSAASPSDGPGPAGFIHDSVVPQPPSDWMPFGFPLAHTMCLVTAYSEGEEGIRTTLDSIAMTDYPNSHKAIVVICDGIIKGKGEAVSTPDVCLGMMKDHATPPDMVESFSYVAVASGSKRHNMAKVYCGFYDYGNKSRIPVEKQQRVPMMLIVKCGTPDEADKAKPGNRGKRDSQIILMSFLQKVMFDERMTELEYEMFNGLWKVTGISPDYYEIVLMVDADTKVFPDSLTHMVSAMVKDPEIMGLCGETKIANKRDSWVTAIQVFEYFISHHLAKSFESVFGGVTCLPGCFCMYRIKAPKGGQNYWVPILANPDVVEHYSENVVETLHEKNLYLLGEDRYLTTLMLRTFPKRKQVFVPQAVCKTTVPDKFMVLLSQRRRWINSTVHNLMELILVRDLCGTFCFSMQFVVFVELVGTLVLPAAIAFTFYVVITSIIHSPPQIIPLVLLALILGLPGLLILVTAHSWSYVVWMLIYLVSLPIWNFVLPTYAFWKFDDFSWGDTRKTAGDKVKKGGIEYQGEFDSSKITMKRWAEFEREKRARSAYFGSRENVVGAPGGWAVPPSHAQTDGYYSDA</sequence>
<protein>
    <recommendedName>
        <fullName evidence="5">Chitin synthase IV</fullName>
        <ecNumber evidence="7">2.4.1.16</ecNumber>
    </recommendedName>
    <alternativeName>
        <fullName evidence="6">Chitin-UDP acetyl-glucosaminyl transferase IV</fullName>
    </alternativeName>
    <alternativeName>
        <fullName evidence="5">Class-IV chitin synthase IV</fullName>
    </alternativeName>
</protein>
<keyword id="KW-1003">Cell membrane</keyword>
<keyword id="KW-0325">Glycoprotein</keyword>
<keyword id="KW-0328">Glycosyltransferase</keyword>
<keyword id="KW-0472">Membrane</keyword>
<keyword id="KW-1185">Reference proteome</keyword>
<keyword id="KW-0808">Transferase</keyword>
<keyword id="KW-0812">Transmembrane</keyword>
<keyword id="KW-1133">Transmembrane helix</keyword>
<proteinExistence type="evidence at transcript level"/>
<reference key="1">
    <citation type="journal article" date="2011" name="PLoS Genet.">
        <title>Genome sequencing and comparative transcriptomics of the model entomopathogenic fungi Metarhizium anisopliae and M. acridum.</title>
        <authorList>
            <person name="Gao Q."/>
            <person name="Jin K."/>
            <person name="Ying S.-H."/>
            <person name="Zhang Y."/>
            <person name="Xiao G."/>
            <person name="Shang Y."/>
            <person name="Duan Z."/>
            <person name="Hu X."/>
            <person name="Xie X.-Q."/>
            <person name="Zhou G."/>
            <person name="Peng G."/>
            <person name="Luo Z."/>
            <person name="Huang W."/>
            <person name="Wang B."/>
            <person name="Fang W."/>
            <person name="Wang S."/>
            <person name="Zhong Y."/>
            <person name="Ma L.-J."/>
            <person name="St Leger R.J."/>
            <person name="Zhao G.-P."/>
            <person name="Pei Y."/>
            <person name="Feng M.-G."/>
            <person name="Xia Y."/>
            <person name="Wang C."/>
        </authorList>
    </citation>
    <scope>NUCLEOTIDE SEQUENCE [LARGE SCALE GENOMIC DNA]</scope>
    <source>
        <strain>CQMa 102</strain>
    </source>
</reference>
<reference key="2">
    <citation type="journal article" date="2019" name="PLoS Pathog.">
        <title>Members of chitin synthase family in Metarhizium acridum differentially affect fungal growth, stress tolerances, cell wall integrity and virulence.</title>
        <authorList>
            <person name="Zhang J."/>
            <person name="Jiang H."/>
            <person name="Du Y."/>
            <person name="Keyhani N.O."/>
            <person name="Xia Y."/>
            <person name="Jin K."/>
        </authorList>
    </citation>
    <scope>FUNCTION</scope>
    <scope>DISRUPTION PHENOTYPE</scope>
    <scope>TISSUE SPECIFICITY</scope>
</reference>
<name>CHS4_METAQ</name>
<dbReference type="EC" id="2.4.1.16" evidence="7"/>
<dbReference type="EMBL" id="GL698547">
    <property type="protein sequence ID" value="EFY86435.1"/>
    <property type="molecule type" value="Genomic_DNA"/>
</dbReference>
<dbReference type="FunCoup" id="E9ECB5">
    <property type="interactions" value="74"/>
</dbReference>
<dbReference type="STRING" id="655827.E9ECB5"/>
<dbReference type="GeneID" id="19251824"/>
<dbReference type="KEGG" id="maw:19251824"/>
<dbReference type="eggNOG" id="KOG2571">
    <property type="taxonomic scope" value="Eukaryota"/>
</dbReference>
<dbReference type="HOGENOM" id="CLU_002572_1_0_1"/>
<dbReference type="InParanoid" id="E9ECB5"/>
<dbReference type="OMA" id="DIMGLCG"/>
<dbReference type="OrthoDB" id="370884at2759"/>
<dbReference type="PHI-base" id="PHI:9489"/>
<dbReference type="Proteomes" id="UP000002499">
    <property type="component" value="Unassembled WGS sequence"/>
</dbReference>
<dbReference type="GO" id="GO:0030428">
    <property type="term" value="C:cell septum"/>
    <property type="evidence" value="ECO:0007669"/>
    <property type="project" value="TreeGrafter"/>
</dbReference>
<dbReference type="GO" id="GO:0005935">
    <property type="term" value="C:cellular bud neck"/>
    <property type="evidence" value="ECO:0007669"/>
    <property type="project" value="EnsemblFungi"/>
</dbReference>
<dbReference type="GO" id="GO:0045009">
    <property type="term" value="C:chitosome"/>
    <property type="evidence" value="ECO:0007669"/>
    <property type="project" value="EnsemblFungi"/>
</dbReference>
<dbReference type="GO" id="GO:0000131">
    <property type="term" value="C:incipient cellular bud site"/>
    <property type="evidence" value="ECO:0007669"/>
    <property type="project" value="EnsemblFungi"/>
</dbReference>
<dbReference type="GO" id="GO:0005886">
    <property type="term" value="C:plasma membrane"/>
    <property type="evidence" value="ECO:0007669"/>
    <property type="project" value="UniProtKB-SubCell"/>
</dbReference>
<dbReference type="GO" id="GO:0005628">
    <property type="term" value="C:prospore membrane"/>
    <property type="evidence" value="ECO:0007669"/>
    <property type="project" value="EnsemblFungi"/>
</dbReference>
<dbReference type="GO" id="GO:0004100">
    <property type="term" value="F:chitin synthase activity"/>
    <property type="evidence" value="ECO:0007669"/>
    <property type="project" value="UniProtKB-EC"/>
</dbReference>
<dbReference type="GO" id="GO:0030476">
    <property type="term" value="P:ascospore wall assembly"/>
    <property type="evidence" value="ECO:0007669"/>
    <property type="project" value="EnsemblFungi"/>
</dbReference>
<dbReference type="GO" id="GO:0006031">
    <property type="term" value="P:chitin biosynthetic process"/>
    <property type="evidence" value="ECO:0007669"/>
    <property type="project" value="EnsemblFungi"/>
</dbReference>
<dbReference type="GO" id="GO:0097271">
    <property type="term" value="P:protein localization to bud neck"/>
    <property type="evidence" value="ECO:0007669"/>
    <property type="project" value="EnsemblFungi"/>
</dbReference>
<dbReference type="CDD" id="cd04190">
    <property type="entry name" value="Chitin_synth_C"/>
    <property type="match status" value="1"/>
</dbReference>
<dbReference type="Gene3D" id="3.90.550.10">
    <property type="entry name" value="Spore Coat Polysaccharide Biosynthesis Protein SpsA, Chain A"/>
    <property type="match status" value="1"/>
</dbReference>
<dbReference type="InterPro" id="IPR004835">
    <property type="entry name" value="Chitin_synth"/>
</dbReference>
<dbReference type="InterPro" id="IPR054295">
    <property type="entry name" value="CHS4-like_dom"/>
</dbReference>
<dbReference type="InterPro" id="IPR029044">
    <property type="entry name" value="Nucleotide-diphossugar_trans"/>
</dbReference>
<dbReference type="PANTHER" id="PTHR22914">
    <property type="entry name" value="CHITIN SYNTHASE"/>
    <property type="match status" value="1"/>
</dbReference>
<dbReference type="PANTHER" id="PTHR22914:SF16">
    <property type="entry name" value="CHITIN SYNTHASE 3"/>
    <property type="match status" value="1"/>
</dbReference>
<dbReference type="Pfam" id="PF03142">
    <property type="entry name" value="Chitin_synth_2"/>
    <property type="match status" value="1"/>
</dbReference>
<dbReference type="Pfam" id="PF22997">
    <property type="entry name" value="CHS4"/>
    <property type="match status" value="1"/>
</dbReference>
<dbReference type="SUPFAM" id="SSF53448">
    <property type="entry name" value="Nucleotide-diphospho-sugar transferases"/>
    <property type="match status" value="1"/>
</dbReference>
<evidence type="ECO:0000255" key="1"/>
<evidence type="ECO:0000255" key="2">
    <source>
        <dbReference type="PROSITE-ProRule" id="PRU00498"/>
    </source>
</evidence>
<evidence type="ECO:0000256" key="3">
    <source>
        <dbReference type="SAM" id="MobiDB-lite"/>
    </source>
</evidence>
<evidence type="ECO:0000269" key="4">
    <source>
    </source>
</evidence>
<evidence type="ECO:0000303" key="5">
    <source>
    </source>
</evidence>
<evidence type="ECO:0000305" key="6"/>
<evidence type="ECO:0000305" key="7">
    <source>
    </source>
</evidence>
<organism>
    <name type="scientific">Metarhizium acridum (strain CQMa 102)</name>
    <dbReference type="NCBI Taxonomy" id="655827"/>
    <lineage>
        <taxon>Eukaryota</taxon>
        <taxon>Fungi</taxon>
        <taxon>Dikarya</taxon>
        <taxon>Ascomycota</taxon>
        <taxon>Pezizomycotina</taxon>
        <taxon>Sordariomycetes</taxon>
        <taxon>Hypocreomycetidae</taxon>
        <taxon>Hypocreales</taxon>
        <taxon>Clavicipitaceae</taxon>
        <taxon>Metarhizium</taxon>
    </lineage>
</organism>
<feature type="chain" id="PRO_0000460863" description="Chitin synthase IV">
    <location>
        <begin position="1"/>
        <end position="1226"/>
    </location>
</feature>
<feature type="transmembrane region" description="Helical" evidence="1">
    <location>
        <begin position="246"/>
        <end position="266"/>
    </location>
</feature>
<feature type="transmembrane region" description="Helical" evidence="1">
    <location>
        <begin position="516"/>
        <end position="536"/>
    </location>
</feature>
<feature type="transmembrane region" description="Helical" evidence="1">
    <location>
        <begin position="1060"/>
        <end position="1080"/>
    </location>
</feature>
<feature type="transmembrane region" description="Helical" evidence="1">
    <location>
        <begin position="1094"/>
        <end position="1114"/>
    </location>
</feature>
<feature type="transmembrane region" description="Helical" evidence="1">
    <location>
        <begin position="1118"/>
        <end position="1138"/>
    </location>
</feature>
<feature type="region of interest" description="Disordered" evidence="3">
    <location>
        <begin position="1"/>
        <end position="205"/>
    </location>
</feature>
<feature type="region of interest" description="Disordered" evidence="3">
    <location>
        <begin position="572"/>
        <end position="671"/>
    </location>
</feature>
<feature type="compositionally biased region" description="Polar residues" evidence="3">
    <location>
        <begin position="49"/>
        <end position="65"/>
    </location>
</feature>
<feature type="compositionally biased region" description="Low complexity" evidence="3">
    <location>
        <begin position="66"/>
        <end position="75"/>
    </location>
</feature>
<feature type="compositionally biased region" description="Basic and acidic residues" evidence="3">
    <location>
        <begin position="94"/>
        <end position="107"/>
    </location>
</feature>
<feature type="compositionally biased region" description="Polar residues" evidence="3">
    <location>
        <begin position="134"/>
        <end position="151"/>
    </location>
</feature>
<feature type="compositionally biased region" description="Basic and acidic residues" evidence="3">
    <location>
        <begin position="163"/>
        <end position="172"/>
    </location>
</feature>
<feature type="compositionally biased region" description="Basic residues" evidence="3">
    <location>
        <begin position="173"/>
        <end position="198"/>
    </location>
</feature>
<feature type="compositionally biased region" description="Polar residues" evidence="3">
    <location>
        <begin position="580"/>
        <end position="601"/>
    </location>
</feature>
<feature type="compositionally biased region" description="Polar residues" evidence="3">
    <location>
        <begin position="618"/>
        <end position="643"/>
    </location>
</feature>
<feature type="compositionally biased region" description="Low complexity" evidence="3">
    <location>
        <begin position="649"/>
        <end position="666"/>
    </location>
</feature>
<feature type="glycosylation site" description="N-linked (GlcNAc...) asparagine" evidence="2">
    <location>
        <position position="381"/>
    </location>
</feature>
<feature type="glycosylation site" description="N-linked (GlcNAc...) asparagine" evidence="2">
    <location>
        <position position="421"/>
    </location>
</feature>
<feature type="glycosylation site" description="N-linked (GlcNAc...) asparagine" evidence="2">
    <location>
        <position position="443"/>
    </location>
</feature>
<feature type="glycosylation site" description="N-linked (GlcNAc...) asparagine" evidence="2">
    <location>
        <position position="640"/>
    </location>
</feature>
<feature type="glycosylation site" description="N-linked (GlcNAc...) asparagine" evidence="2">
    <location>
        <position position="787"/>
    </location>
</feature>
<feature type="glycosylation site" description="N-linked (GlcNAc...) asparagine" evidence="2">
    <location>
        <position position="1035"/>
    </location>
</feature>